<organism>
    <name type="scientific">Mytilus trossulus</name>
    <name type="common">Blue mussel</name>
    <dbReference type="NCBI Taxonomy" id="6551"/>
    <lineage>
        <taxon>Eukaryota</taxon>
        <taxon>Metazoa</taxon>
        <taxon>Spiralia</taxon>
        <taxon>Lophotrochozoa</taxon>
        <taxon>Mollusca</taxon>
        <taxon>Bivalvia</taxon>
        <taxon>Autobranchia</taxon>
        <taxon>Pteriomorphia</taxon>
        <taxon>Mytilida</taxon>
        <taxon>Mytiloidea</taxon>
        <taxon>Mytilidae</taxon>
        <taxon>Mytilinae</taxon>
        <taxon>Mytilus</taxon>
    </lineage>
</organism>
<keyword id="KW-0158">Chromosome</keyword>
<keyword id="KW-0217">Developmental protein</keyword>
<keyword id="KW-0221">Differentiation</keyword>
<keyword id="KW-0903">Direct protein sequencing</keyword>
<keyword id="KW-0226">DNA condensation</keyword>
<keyword id="KW-0238">DNA-binding</keyword>
<keyword id="KW-0544">Nucleosome core</keyword>
<keyword id="KW-0539">Nucleus</keyword>
<keyword id="KW-0744">Spermatogenesis</keyword>
<feature type="initiator methionine" description="Removed">
    <location>
        <position position="1"/>
    </location>
</feature>
<feature type="chain" id="PRO_0000013164" description="Sperm-specific protein PHI-2B">
    <location>
        <begin position="2"/>
        <end position="145"/>
    </location>
</feature>
<feature type="chain" id="PRO_0000013165" description="Sperm-specific protein PHI-3">
    <location>
        <begin position="146"/>
        <end position="203"/>
    </location>
</feature>
<feature type="domain" description="H15" evidence="2">
    <location>
        <begin position="41"/>
        <end position="120"/>
    </location>
</feature>
<feature type="region of interest" description="Disordered" evidence="3">
    <location>
        <begin position="1"/>
        <end position="46"/>
    </location>
</feature>
<feature type="region of interest" description="Disordered" evidence="3">
    <location>
        <begin position="104"/>
        <end position="203"/>
    </location>
</feature>
<feature type="compositionally biased region" description="Basic residues" evidence="3">
    <location>
        <begin position="1"/>
        <end position="35"/>
    </location>
</feature>
<feature type="compositionally biased region" description="Basic residues" evidence="3">
    <location>
        <begin position="126"/>
        <end position="140"/>
    </location>
</feature>
<feature type="compositionally biased region" description="Basic residues" evidence="3">
    <location>
        <begin position="147"/>
        <end position="203"/>
    </location>
</feature>
<feature type="sequence variant" description="In variant 2.">
    <original>V</original>
    <variation>A</variation>
    <location>
        <position position="40"/>
    </location>
</feature>
<feature type="sequence variant" description="In variant 2.">
    <original>S</original>
    <variation>T</variation>
    <location>
        <position position="44"/>
    </location>
</feature>
<feature type="sequence variant" description="In variant 2.">
    <original>P</original>
    <variation>L</variation>
    <location>
        <position position="103"/>
    </location>
</feature>
<feature type="sequence variant" description="In variant 2.">
    <original>K</original>
    <variation>KKSK</variation>
    <location>
        <position position="140"/>
    </location>
</feature>
<feature type="sequence variant" description="In variant 2.">
    <original>R</original>
    <variation>K</variation>
    <location>
        <position position="153"/>
    </location>
</feature>
<accession>Q05831</accession>
<dbReference type="EMBL" id="L02875">
    <property type="status" value="NOT_ANNOTATED_CDS"/>
    <property type="molecule type" value="mRNA"/>
</dbReference>
<dbReference type="EMBL" id="L02876">
    <property type="status" value="NOT_ANNOTATED_CDS"/>
    <property type="molecule type" value="mRNA"/>
</dbReference>
<dbReference type="PIR" id="A45317">
    <property type="entry name" value="A45317"/>
</dbReference>
<dbReference type="PIR" id="B45317">
    <property type="entry name" value="B45317"/>
</dbReference>
<dbReference type="RefSeq" id="XP_063420213.1">
    <property type="nucleotide sequence ID" value="XM_063564143.1"/>
</dbReference>
<dbReference type="SMR" id="Q05831"/>
<dbReference type="GeneID" id="134705405"/>
<dbReference type="GO" id="GO:0000786">
    <property type="term" value="C:nucleosome"/>
    <property type="evidence" value="ECO:0007669"/>
    <property type="project" value="UniProtKB-KW"/>
</dbReference>
<dbReference type="GO" id="GO:0005634">
    <property type="term" value="C:nucleus"/>
    <property type="evidence" value="ECO:0007669"/>
    <property type="project" value="UniProtKB-SubCell"/>
</dbReference>
<dbReference type="GO" id="GO:0003677">
    <property type="term" value="F:DNA binding"/>
    <property type="evidence" value="ECO:0007669"/>
    <property type="project" value="UniProtKB-KW"/>
</dbReference>
<dbReference type="GO" id="GO:0030527">
    <property type="term" value="F:structural constituent of chromatin"/>
    <property type="evidence" value="ECO:0007669"/>
    <property type="project" value="InterPro"/>
</dbReference>
<dbReference type="GO" id="GO:0030154">
    <property type="term" value="P:cell differentiation"/>
    <property type="evidence" value="ECO:0007669"/>
    <property type="project" value="UniProtKB-KW"/>
</dbReference>
<dbReference type="GO" id="GO:0030261">
    <property type="term" value="P:chromosome condensation"/>
    <property type="evidence" value="ECO:0007669"/>
    <property type="project" value="UniProtKB-KW"/>
</dbReference>
<dbReference type="GO" id="GO:0006334">
    <property type="term" value="P:nucleosome assembly"/>
    <property type="evidence" value="ECO:0007669"/>
    <property type="project" value="InterPro"/>
</dbReference>
<dbReference type="GO" id="GO:0007283">
    <property type="term" value="P:spermatogenesis"/>
    <property type="evidence" value="ECO:0007669"/>
    <property type="project" value="UniProtKB-KW"/>
</dbReference>
<dbReference type="CDD" id="cd00073">
    <property type="entry name" value="H15"/>
    <property type="match status" value="1"/>
</dbReference>
<dbReference type="Gene3D" id="1.10.10.10">
    <property type="entry name" value="Winged helix-like DNA-binding domain superfamily/Winged helix DNA-binding domain"/>
    <property type="match status" value="1"/>
</dbReference>
<dbReference type="InterPro" id="IPR005819">
    <property type="entry name" value="H1/H5"/>
</dbReference>
<dbReference type="InterPro" id="IPR005818">
    <property type="entry name" value="Histone_H1/H5_H15"/>
</dbReference>
<dbReference type="InterPro" id="IPR036388">
    <property type="entry name" value="WH-like_DNA-bd_sf"/>
</dbReference>
<dbReference type="InterPro" id="IPR036390">
    <property type="entry name" value="WH_DNA-bd_sf"/>
</dbReference>
<dbReference type="Pfam" id="PF00538">
    <property type="entry name" value="Linker_histone"/>
    <property type="match status" value="1"/>
</dbReference>
<dbReference type="PRINTS" id="PR00624">
    <property type="entry name" value="HISTONEH5"/>
</dbReference>
<dbReference type="SMART" id="SM00526">
    <property type="entry name" value="H15"/>
    <property type="match status" value="1"/>
</dbReference>
<dbReference type="SUPFAM" id="SSF46785">
    <property type="entry name" value="Winged helix' DNA-binding domain"/>
    <property type="match status" value="1"/>
</dbReference>
<dbReference type="PROSITE" id="PS51504">
    <property type="entry name" value="H15"/>
    <property type="match status" value="1"/>
</dbReference>
<protein>
    <recommendedName>
        <fullName>Sperm-specific protein PHI-2B/PHI-3</fullName>
    </recommendedName>
    <component>
        <recommendedName>
            <fullName>Sperm-specific protein PHI-2B</fullName>
        </recommendedName>
        <alternativeName>
            <fullName>PL-II*</fullName>
        </alternativeName>
        <alternativeName>
            <fullName>Sperm-specific linker histone H1-like protein</fullName>
        </alternativeName>
    </component>
    <component>
        <recommendedName>
            <fullName>Sperm-specific protein PHI-3</fullName>
        </recommendedName>
        <alternativeName>
            <fullName>PL-IV</fullName>
        </alternativeName>
        <alternativeName>
            <fullName>Protamine-like protein PHI-3</fullName>
        </alternativeName>
    </component>
</protein>
<reference key="1">
    <citation type="journal article" date="1993" name="J. Biol. Chem.">
        <title>Post-translational cleavage of a histone H1-like protein in the sperm of Mytilus.</title>
        <authorList>
            <person name="Carlos S."/>
            <person name="Hunt D.F."/>
            <person name="Rocchini C."/>
            <person name="Arnott D.P."/>
            <person name="Ausio J."/>
        </authorList>
    </citation>
    <scope>NUCLEOTIDE SEQUENCE [MRNA]</scope>
    <scope>PROTEIN SEQUENCE OF 146-203</scope>
    <scope>TISSUE SPECIFICITY</scope>
    <source>
        <tissue>Sperm</tissue>
    </source>
</reference>
<comment type="function">
    <text evidence="1">Linker histones are implicated in chromatin remodeling and/or transcriptional regulation during spermiogenesis, the process of spermatid maturation into spermatozoa. Protamines substitute for histones in the chromatin of sperm during the haploid phase of spermatogenesis. They compact sperm DNA into a highly condensed, stable and inactive complex (By similarity).</text>
</comment>
<comment type="subcellular location">
    <subcellularLocation>
        <location>Nucleus</location>
    </subcellularLocation>
    <subcellularLocation>
        <location>Chromosome</location>
    </subcellularLocation>
</comment>
<comment type="tissue specificity">
    <text evidence="4">Sperm.</text>
</comment>
<comment type="PTM">
    <text>PL-II* and PL-IV are produced by post-translational cleavage of a common precursor.</text>
</comment>
<comment type="miscellaneous">
    <text>The sequence of variant I is shown.</text>
</comment>
<sequence length="203" mass="21602">MPSPSRKSRSRSRSRSKSPKRSPAKKARKTPKKPRAAGGVKKPSTLSMIVAAITAMKNRKGSSVQAIRKYILANNKGINTSHLGSAMKLAFAKGLKSGVLVRPKTSAGASGATGSFRVGKAPASPKKAKKAKSPKKKSSKNKSNNAKAKKSPRKKAAVKKSTKSKAKKPKSPKKKAAKKTARKSPKKKARKSPKKKAAKKSKK</sequence>
<proteinExistence type="evidence at protein level"/>
<name>H1L_MYTTR</name>
<evidence type="ECO:0000250" key="1"/>
<evidence type="ECO:0000255" key="2">
    <source>
        <dbReference type="PROSITE-ProRule" id="PRU00837"/>
    </source>
</evidence>
<evidence type="ECO:0000256" key="3">
    <source>
        <dbReference type="SAM" id="MobiDB-lite"/>
    </source>
</evidence>
<evidence type="ECO:0000269" key="4">
    <source>
    </source>
</evidence>